<name>YYCQ_BACSU</name>
<reference key="1">
    <citation type="journal article" date="1997" name="DNA Res.">
        <title>Sequence analysis of the 36-kb region between gntZ and trnY genes of Bacillus subtilis genome.</title>
        <authorList>
            <person name="Kasahara Y."/>
            <person name="Nakai S."/>
            <person name="Ogasawara N."/>
        </authorList>
    </citation>
    <scope>NUCLEOTIDE SEQUENCE [GENOMIC DNA]</scope>
    <source>
        <strain>168</strain>
    </source>
</reference>
<reference key="2">
    <citation type="journal article" date="1997" name="Nature">
        <title>The complete genome sequence of the Gram-positive bacterium Bacillus subtilis.</title>
        <authorList>
            <person name="Kunst F."/>
            <person name="Ogasawara N."/>
            <person name="Moszer I."/>
            <person name="Albertini A.M."/>
            <person name="Alloni G."/>
            <person name="Azevedo V."/>
            <person name="Bertero M.G."/>
            <person name="Bessieres P."/>
            <person name="Bolotin A."/>
            <person name="Borchert S."/>
            <person name="Borriss R."/>
            <person name="Boursier L."/>
            <person name="Brans A."/>
            <person name="Braun M."/>
            <person name="Brignell S.C."/>
            <person name="Bron S."/>
            <person name="Brouillet S."/>
            <person name="Bruschi C.V."/>
            <person name="Caldwell B."/>
            <person name="Capuano V."/>
            <person name="Carter N.M."/>
            <person name="Choi S.-K."/>
            <person name="Codani J.-J."/>
            <person name="Connerton I.F."/>
            <person name="Cummings N.J."/>
            <person name="Daniel R.A."/>
            <person name="Denizot F."/>
            <person name="Devine K.M."/>
            <person name="Duesterhoeft A."/>
            <person name="Ehrlich S.D."/>
            <person name="Emmerson P.T."/>
            <person name="Entian K.-D."/>
            <person name="Errington J."/>
            <person name="Fabret C."/>
            <person name="Ferrari E."/>
            <person name="Foulger D."/>
            <person name="Fritz C."/>
            <person name="Fujita M."/>
            <person name="Fujita Y."/>
            <person name="Fuma S."/>
            <person name="Galizzi A."/>
            <person name="Galleron N."/>
            <person name="Ghim S.-Y."/>
            <person name="Glaser P."/>
            <person name="Goffeau A."/>
            <person name="Golightly E.J."/>
            <person name="Grandi G."/>
            <person name="Guiseppi G."/>
            <person name="Guy B.J."/>
            <person name="Haga K."/>
            <person name="Haiech J."/>
            <person name="Harwood C.R."/>
            <person name="Henaut A."/>
            <person name="Hilbert H."/>
            <person name="Holsappel S."/>
            <person name="Hosono S."/>
            <person name="Hullo M.-F."/>
            <person name="Itaya M."/>
            <person name="Jones L.-M."/>
            <person name="Joris B."/>
            <person name="Karamata D."/>
            <person name="Kasahara Y."/>
            <person name="Klaerr-Blanchard M."/>
            <person name="Klein C."/>
            <person name="Kobayashi Y."/>
            <person name="Koetter P."/>
            <person name="Koningstein G."/>
            <person name="Krogh S."/>
            <person name="Kumano M."/>
            <person name="Kurita K."/>
            <person name="Lapidus A."/>
            <person name="Lardinois S."/>
            <person name="Lauber J."/>
            <person name="Lazarevic V."/>
            <person name="Lee S.-M."/>
            <person name="Levine A."/>
            <person name="Liu H."/>
            <person name="Masuda S."/>
            <person name="Mauel C."/>
            <person name="Medigue C."/>
            <person name="Medina N."/>
            <person name="Mellado R.P."/>
            <person name="Mizuno M."/>
            <person name="Moestl D."/>
            <person name="Nakai S."/>
            <person name="Noback M."/>
            <person name="Noone D."/>
            <person name="O'Reilly M."/>
            <person name="Ogawa K."/>
            <person name="Ogiwara A."/>
            <person name="Oudega B."/>
            <person name="Park S.-H."/>
            <person name="Parro V."/>
            <person name="Pohl T.M."/>
            <person name="Portetelle D."/>
            <person name="Porwollik S."/>
            <person name="Prescott A.M."/>
            <person name="Presecan E."/>
            <person name="Pujic P."/>
            <person name="Purnelle B."/>
            <person name="Rapoport G."/>
            <person name="Rey M."/>
            <person name="Reynolds S."/>
            <person name="Rieger M."/>
            <person name="Rivolta C."/>
            <person name="Rocha E."/>
            <person name="Roche B."/>
            <person name="Rose M."/>
            <person name="Sadaie Y."/>
            <person name="Sato T."/>
            <person name="Scanlan E."/>
            <person name="Schleich S."/>
            <person name="Schroeter R."/>
            <person name="Scoffone F."/>
            <person name="Sekiguchi J."/>
            <person name="Sekowska A."/>
            <person name="Seror S.J."/>
            <person name="Serror P."/>
            <person name="Shin B.-S."/>
            <person name="Soldo B."/>
            <person name="Sorokin A."/>
            <person name="Tacconi E."/>
            <person name="Takagi T."/>
            <person name="Takahashi H."/>
            <person name="Takemaru K."/>
            <person name="Takeuchi M."/>
            <person name="Tamakoshi A."/>
            <person name="Tanaka T."/>
            <person name="Terpstra P."/>
            <person name="Tognoni A."/>
            <person name="Tosato V."/>
            <person name="Uchiyama S."/>
            <person name="Vandenbol M."/>
            <person name="Vannier F."/>
            <person name="Vassarotti A."/>
            <person name="Viari A."/>
            <person name="Wambutt R."/>
            <person name="Wedler E."/>
            <person name="Wedler H."/>
            <person name="Weitzenegger T."/>
            <person name="Winters P."/>
            <person name="Wipat A."/>
            <person name="Yamamoto H."/>
            <person name="Yamane K."/>
            <person name="Yasumoto K."/>
            <person name="Yata K."/>
            <person name="Yoshida K."/>
            <person name="Yoshikawa H.-F."/>
            <person name="Zumstein E."/>
            <person name="Yoshikawa H."/>
            <person name="Danchin A."/>
        </authorList>
    </citation>
    <scope>NUCLEOTIDE SEQUENCE [LARGE SCALE GENOMIC DNA]</scope>
    <source>
        <strain>168</strain>
    </source>
</reference>
<feature type="chain" id="PRO_0000050075" description="Uncharacterized protein YycQ">
    <location>
        <begin position="1"/>
        <end position="82"/>
    </location>
</feature>
<feature type="transmembrane region" description="Helical" evidence="1">
    <location>
        <begin position="4"/>
        <end position="26"/>
    </location>
</feature>
<feature type="transmembrane region" description="Helical" evidence="1">
    <location>
        <begin position="31"/>
        <end position="50"/>
    </location>
</feature>
<feature type="transmembrane region" description="Helical" evidence="1">
    <location>
        <begin position="55"/>
        <end position="77"/>
    </location>
</feature>
<accession>Q45605</accession>
<gene>
    <name type="primary">yycQ</name>
    <name type="ordered locus">BSU40260</name>
</gene>
<keyword id="KW-1003">Cell membrane</keyword>
<keyword id="KW-0472">Membrane</keyword>
<keyword id="KW-1185">Reference proteome</keyword>
<keyword id="KW-0812">Transmembrane</keyword>
<keyword id="KW-1133">Transmembrane helix</keyword>
<dbReference type="EMBL" id="D78193">
    <property type="protein sequence ID" value="BAA11285.1"/>
    <property type="molecule type" value="Genomic_DNA"/>
</dbReference>
<dbReference type="EMBL" id="AL009126">
    <property type="protein sequence ID" value="CAB16063.1"/>
    <property type="molecule type" value="Genomic_DNA"/>
</dbReference>
<dbReference type="PIR" id="E70090">
    <property type="entry name" value="E70090"/>
</dbReference>
<dbReference type="RefSeq" id="NP_391906.1">
    <property type="nucleotide sequence ID" value="NC_000964.3"/>
</dbReference>
<dbReference type="RefSeq" id="WP_003243630.1">
    <property type="nucleotide sequence ID" value="NZ_OZ025638.1"/>
</dbReference>
<dbReference type="FunCoup" id="Q45605">
    <property type="interactions" value="19"/>
</dbReference>
<dbReference type="STRING" id="224308.BSU40260"/>
<dbReference type="PaxDb" id="224308-BSU40260"/>
<dbReference type="EnsemblBacteria" id="CAB16063">
    <property type="protein sequence ID" value="CAB16063"/>
    <property type="gene ID" value="BSU_40260"/>
</dbReference>
<dbReference type="GeneID" id="937733"/>
<dbReference type="KEGG" id="bsu:BSU40260"/>
<dbReference type="PATRIC" id="fig|224308.179.peg.4356"/>
<dbReference type="eggNOG" id="ENOG5030D2Z">
    <property type="taxonomic scope" value="Bacteria"/>
</dbReference>
<dbReference type="InParanoid" id="Q45605"/>
<dbReference type="OrthoDB" id="2922901at2"/>
<dbReference type="BioCyc" id="BSUB:BSU40260-MONOMER"/>
<dbReference type="Proteomes" id="UP000001570">
    <property type="component" value="Chromosome"/>
</dbReference>
<dbReference type="GO" id="GO:0005886">
    <property type="term" value="C:plasma membrane"/>
    <property type="evidence" value="ECO:0007669"/>
    <property type="project" value="UniProtKB-SubCell"/>
</dbReference>
<dbReference type="InterPro" id="IPR020258">
    <property type="entry name" value="Uncharacterised_YbeF"/>
</dbReference>
<dbReference type="Pfam" id="PF10852">
    <property type="entry name" value="DUF2651"/>
    <property type="match status" value="1"/>
</dbReference>
<comment type="subcellular location">
    <subcellularLocation>
        <location evidence="2">Cell membrane</location>
        <topology evidence="2">Multi-pass membrane protein</topology>
    </subcellularLocation>
</comment>
<proteinExistence type="predicted"/>
<sequence length="82" mass="9002">MGAIAVLFIVFGFPIVAGVFGIAGHFLFKRFWVAPLIVLITSLILLVTLASGNSSFIFWVVMYTAIALVTSVATLFLRKFFE</sequence>
<evidence type="ECO:0000255" key="1"/>
<evidence type="ECO:0000305" key="2"/>
<protein>
    <recommendedName>
        <fullName>Uncharacterized protein YycQ</fullName>
    </recommendedName>
</protein>
<organism>
    <name type="scientific">Bacillus subtilis (strain 168)</name>
    <dbReference type="NCBI Taxonomy" id="224308"/>
    <lineage>
        <taxon>Bacteria</taxon>
        <taxon>Bacillati</taxon>
        <taxon>Bacillota</taxon>
        <taxon>Bacilli</taxon>
        <taxon>Bacillales</taxon>
        <taxon>Bacillaceae</taxon>
        <taxon>Bacillus</taxon>
    </lineage>
</organism>